<protein>
    <recommendedName>
        <fullName evidence="1">Hydroxyacylglutathione hydrolase</fullName>
        <ecNumber evidence="1">3.1.2.6</ecNumber>
    </recommendedName>
    <alternativeName>
        <fullName evidence="1">Glyoxalase II</fullName>
        <shortName evidence="1">Glx II</shortName>
    </alternativeName>
</protein>
<gene>
    <name evidence="1" type="primary">gloB</name>
    <name type="ordered locus">APL_0415</name>
</gene>
<comment type="function">
    <text evidence="1">Thiolesterase that catalyzes the hydrolysis of S-D-lactoyl-glutathione to form glutathione and D-lactic acid.</text>
</comment>
<comment type="catalytic activity">
    <reaction evidence="1">
        <text>an S-(2-hydroxyacyl)glutathione + H2O = a 2-hydroxy carboxylate + glutathione + H(+)</text>
        <dbReference type="Rhea" id="RHEA:21864"/>
        <dbReference type="ChEBI" id="CHEBI:15377"/>
        <dbReference type="ChEBI" id="CHEBI:15378"/>
        <dbReference type="ChEBI" id="CHEBI:57925"/>
        <dbReference type="ChEBI" id="CHEBI:58896"/>
        <dbReference type="ChEBI" id="CHEBI:71261"/>
        <dbReference type="EC" id="3.1.2.6"/>
    </reaction>
</comment>
<comment type="cofactor">
    <cofactor evidence="1">
        <name>Zn(2+)</name>
        <dbReference type="ChEBI" id="CHEBI:29105"/>
    </cofactor>
    <text evidence="1">Binds 2 Zn(2+) ions per subunit.</text>
</comment>
<comment type="pathway">
    <text evidence="1">Secondary metabolite metabolism; methylglyoxal degradation; (R)-lactate from methylglyoxal: step 2/2.</text>
</comment>
<comment type="subunit">
    <text evidence="1">Monomer.</text>
</comment>
<comment type="similarity">
    <text evidence="1">Belongs to the metallo-beta-lactamase superfamily. Glyoxalase II family.</text>
</comment>
<dbReference type="EC" id="3.1.2.6" evidence="1"/>
<dbReference type="EMBL" id="CP000569">
    <property type="protein sequence ID" value="ABN73519.1"/>
    <property type="molecule type" value="Genomic_DNA"/>
</dbReference>
<dbReference type="RefSeq" id="WP_005611589.1">
    <property type="nucleotide sequence ID" value="NC_009053.1"/>
</dbReference>
<dbReference type="SMR" id="A3MZD3"/>
<dbReference type="STRING" id="416269.APL_0415"/>
<dbReference type="EnsemblBacteria" id="ABN73519">
    <property type="protein sequence ID" value="ABN73519"/>
    <property type="gene ID" value="APL_0415"/>
</dbReference>
<dbReference type="KEGG" id="apl:APL_0415"/>
<dbReference type="eggNOG" id="COG0491">
    <property type="taxonomic scope" value="Bacteria"/>
</dbReference>
<dbReference type="HOGENOM" id="CLU_030571_4_1_6"/>
<dbReference type="UniPathway" id="UPA00619">
    <property type="reaction ID" value="UER00676"/>
</dbReference>
<dbReference type="Proteomes" id="UP000001432">
    <property type="component" value="Chromosome"/>
</dbReference>
<dbReference type="GO" id="GO:0004416">
    <property type="term" value="F:hydroxyacylglutathione hydrolase activity"/>
    <property type="evidence" value="ECO:0007669"/>
    <property type="project" value="UniProtKB-UniRule"/>
</dbReference>
<dbReference type="GO" id="GO:0046872">
    <property type="term" value="F:metal ion binding"/>
    <property type="evidence" value="ECO:0007669"/>
    <property type="project" value="UniProtKB-KW"/>
</dbReference>
<dbReference type="GO" id="GO:0019243">
    <property type="term" value="P:methylglyoxal catabolic process to D-lactate via S-lactoyl-glutathione"/>
    <property type="evidence" value="ECO:0007669"/>
    <property type="project" value="InterPro"/>
</dbReference>
<dbReference type="CDD" id="cd07723">
    <property type="entry name" value="hydroxyacylglutathione_hydrolase_MBL-fold"/>
    <property type="match status" value="1"/>
</dbReference>
<dbReference type="Gene3D" id="3.60.15.10">
    <property type="entry name" value="Ribonuclease Z/Hydroxyacylglutathione hydrolase-like"/>
    <property type="match status" value="1"/>
</dbReference>
<dbReference type="HAMAP" id="MF_01374">
    <property type="entry name" value="Glyoxalase_2"/>
    <property type="match status" value="1"/>
</dbReference>
<dbReference type="InterPro" id="IPR035680">
    <property type="entry name" value="Clx_II_MBL"/>
</dbReference>
<dbReference type="InterPro" id="IPR050110">
    <property type="entry name" value="Glyoxalase_II_hydrolase"/>
</dbReference>
<dbReference type="InterPro" id="IPR032282">
    <property type="entry name" value="HAGH_C"/>
</dbReference>
<dbReference type="InterPro" id="IPR017782">
    <property type="entry name" value="Hydroxyacylglutathione_Hdrlase"/>
</dbReference>
<dbReference type="InterPro" id="IPR001279">
    <property type="entry name" value="Metallo-B-lactamas"/>
</dbReference>
<dbReference type="InterPro" id="IPR036866">
    <property type="entry name" value="RibonucZ/Hydroxyglut_hydro"/>
</dbReference>
<dbReference type="NCBIfam" id="TIGR03413">
    <property type="entry name" value="GSH_gloB"/>
    <property type="match status" value="1"/>
</dbReference>
<dbReference type="PANTHER" id="PTHR43705">
    <property type="entry name" value="HYDROXYACYLGLUTATHIONE HYDROLASE"/>
    <property type="match status" value="1"/>
</dbReference>
<dbReference type="PANTHER" id="PTHR43705:SF1">
    <property type="entry name" value="HYDROXYACYLGLUTATHIONE HYDROLASE GLOB"/>
    <property type="match status" value="1"/>
</dbReference>
<dbReference type="Pfam" id="PF16123">
    <property type="entry name" value="HAGH_C"/>
    <property type="match status" value="1"/>
</dbReference>
<dbReference type="Pfam" id="PF00753">
    <property type="entry name" value="Lactamase_B"/>
    <property type="match status" value="1"/>
</dbReference>
<dbReference type="SMART" id="SM00849">
    <property type="entry name" value="Lactamase_B"/>
    <property type="match status" value="1"/>
</dbReference>
<dbReference type="SUPFAM" id="SSF56281">
    <property type="entry name" value="Metallo-hydrolase/oxidoreductase"/>
    <property type="match status" value="1"/>
</dbReference>
<evidence type="ECO:0000255" key="1">
    <source>
        <dbReference type="HAMAP-Rule" id="MF_01374"/>
    </source>
</evidence>
<name>GLO2_ACTP2</name>
<proteinExistence type="inferred from homology"/>
<accession>A3MZD3</accession>
<organism>
    <name type="scientific">Actinobacillus pleuropneumoniae serotype 5b (strain L20)</name>
    <dbReference type="NCBI Taxonomy" id="416269"/>
    <lineage>
        <taxon>Bacteria</taxon>
        <taxon>Pseudomonadati</taxon>
        <taxon>Pseudomonadota</taxon>
        <taxon>Gammaproteobacteria</taxon>
        <taxon>Pasteurellales</taxon>
        <taxon>Pasteurellaceae</taxon>
        <taxon>Actinobacillus</taxon>
    </lineage>
</organism>
<reference key="1">
    <citation type="journal article" date="2008" name="J. Bacteriol.">
        <title>The complete genome sequence of Actinobacillus pleuropneumoniae L20 (serotype 5b).</title>
        <authorList>
            <person name="Foote S.J."/>
            <person name="Bosse J.T."/>
            <person name="Bouevitch A.B."/>
            <person name="Langford P.R."/>
            <person name="Young N.M."/>
            <person name="Nash J.H.E."/>
        </authorList>
    </citation>
    <scope>NUCLEOTIDE SEQUENCE [LARGE SCALE GENOMIC DNA]</scope>
    <source>
        <strain>L20</strain>
    </source>
</reference>
<sequence length="235" mass="26614">MLNITPIPALSDNYIWAIQKDNDVIIVDPSDAVPVLAFIAKNQLNLTAILLTHNHHDHTDGMPELLSRYPQLSVYGPQEVAQFANRIVQPEDHLTLFDYDVRVIESAGHTAQHVSYLFGNEYLFCGDALFSGGCGRVFTGNYQAQFDALQRFKALPEFVEIFPAHEYTLSNLKFAEAVLAPSCALFEIQERAEILRSRNQPTLPTTLERELQINPFLQAVDLDQFIALRHQKDNF</sequence>
<feature type="chain" id="PRO_0000309621" description="Hydroxyacylglutathione hydrolase">
    <location>
        <begin position="1"/>
        <end position="235"/>
    </location>
</feature>
<feature type="binding site" evidence="1">
    <location>
        <position position="53"/>
    </location>
    <ligand>
        <name>Zn(2+)</name>
        <dbReference type="ChEBI" id="CHEBI:29105"/>
        <label>1</label>
    </ligand>
</feature>
<feature type="binding site" evidence="1">
    <location>
        <position position="55"/>
    </location>
    <ligand>
        <name>Zn(2+)</name>
        <dbReference type="ChEBI" id="CHEBI:29105"/>
        <label>1</label>
    </ligand>
</feature>
<feature type="binding site" evidence="1">
    <location>
        <position position="57"/>
    </location>
    <ligand>
        <name>Zn(2+)</name>
        <dbReference type="ChEBI" id="CHEBI:29105"/>
        <label>2</label>
    </ligand>
</feature>
<feature type="binding site" evidence="1">
    <location>
        <position position="58"/>
    </location>
    <ligand>
        <name>Zn(2+)</name>
        <dbReference type="ChEBI" id="CHEBI:29105"/>
        <label>2</label>
    </ligand>
</feature>
<feature type="binding site" evidence="1">
    <location>
        <position position="109"/>
    </location>
    <ligand>
        <name>Zn(2+)</name>
        <dbReference type="ChEBI" id="CHEBI:29105"/>
        <label>1</label>
    </ligand>
</feature>
<feature type="binding site" evidence="1">
    <location>
        <position position="127"/>
    </location>
    <ligand>
        <name>Zn(2+)</name>
        <dbReference type="ChEBI" id="CHEBI:29105"/>
        <label>1</label>
    </ligand>
</feature>
<feature type="binding site" evidence="1">
    <location>
        <position position="127"/>
    </location>
    <ligand>
        <name>Zn(2+)</name>
        <dbReference type="ChEBI" id="CHEBI:29105"/>
        <label>2</label>
    </ligand>
</feature>
<feature type="binding site" evidence="1">
    <location>
        <position position="165"/>
    </location>
    <ligand>
        <name>Zn(2+)</name>
        <dbReference type="ChEBI" id="CHEBI:29105"/>
        <label>2</label>
    </ligand>
</feature>
<keyword id="KW-0378">Hydrolase</keyword>
<keyword id="KW-0479">Metal-binding</keyword>
<keyword id="KW-1185">Reference proteome</keyword>
<keyword id="KW-0862">Zinc</keyword>